<sequence>MSRGTGAGYDRHITIFSPEGRLYQVEYAFKAVKSAGVTSIGVRGKDSVCVVTQKKVPDKLLDHTSVTHLFPITKYIGLLATGLTADARSLVYQARNEAAEFRFKWGYEMPVDVLAKWIADKAQVYTQHAYMRPLGVVAMVLGYDEEKNAQLFKCDPAGHFFGHKATSAGLKEQEAINFLEKKMKDDPQFSYEETVQIAISALQSVLQEDFKATEIEVGVVRKDDRVFRALTTEEIDQHLTAISERD</sequence>
<gene>
    <name type="primary">PAA1</name>
    <name type="ordered locus">Os03g0180400</name>
    <name type="ordered locus">LOC_Os03g08280</name>
    <name evidence="3" type="ORF">OsJ_09653</name>
    <name type="ORF">OSJNBa0050H14.19</name>
    <name type="ORF">OSJNBb0076N15.5</name>
</gene>
<evidence type="ECO:0000250" key="1"/>
<evidence type="ECO:0000255" key="2">
    <source>
        <dbReference type="PROSITE-ProRule" id="PRU00808"/>
    </source>
</evidence>
<evidence type="ECO:0000312" key="3">
    <source>
        <dbReference type="EMBL" id="EAZ25813.1"/>
    </source>
</evidence>
<dbReference type="EMBL" id="AB026558">
    <property type="protein sequence ID" value="BAA96829.1"/>
    <property type="molecule type" value="mRNA"/>
</dbReference>
<dbReference type="EMBL" id="AC125472">
    <property type="protein sequence ID" value="AAO13479.1"/>
    <property type="molecule type" value="Genomic_DNA"/>
</dbReference>
<dbReference type="EMBL" id="AC126223">
    <property type="protein sequence ID" value="AAN65435.1"/>
    <property type="molecule type" value="Genomic_DNA"/>
</dbReference>
<dbReference type="EMBL" id="DP000009">
    <property type="protein sequence ID" value="ABF94305.1"/>
    <property type="molecule type" value="Genomic_DNA"/>
</dbReference>
<dbReference type="EMBL" id="AP008209">
    <property type="protein sequence ID" value="BAF11076.1"/>
    <property type="molecule type" value="Genomic_DNA"/>
</dbReference>
<dbReference type="EMBL" id="AP014959">
    <property type="protein sequence ID" value="BAS82617.1"/>
    <property type="molecule type" value="Genomic_DNA"/>
</dbReference>
<dbReference type="EMBL" id="CM000140">
    <property type="protein sequence ID" value="EAZ25813.1"/>
    <property type="molecule type" value="Genomic_DNA"/>
</dbReference>
<dbReference type="EMBL" id="AK059929">
    <property type="protein sequence ID" value="BAG87220.1"/>
    <property type="molecule type" value="mRNA"/>
</dbReference>
<dbReference type="EMBL" id="AK060026">
    <property type="protein sequence ID" value="BAG87278.1"/>
    <property type="molecule type" value="mRNA"/>
</dbReference>
<dbReference type="EMBL" id="AK101031">
    <property type="protein sequence ID" value="BAG94887.1"/>
    <property type="molecule type" value="mRNA"/>
</dbReference>
<dbReference type="RefSeq" id="XP_015630351.1">
    <property type="nucleotide sequence ID" value="XM_015774865.1"/>
</dbReference>
<dbReference type="SMR" id="Q9LSU3"/>
<dbReference type="FunCoup" id="Q9LSU3">
    <property type="interactions" value="3296"/>
</dbReference>
<dbReference type="STRING" id="39947.Q9LSU3"/>
<dbReference type="MEROPS" id="T01.971"/>
<dbReference type="PaxDb" id="39947-Q9LSU3"/>
<dbReference type="EnsemblPlants" id="Os03t0180400-01">
    <property type="protein sequence ID" value="Os03t0180400-01"/>
    <property type="gene ID" value="Os03g0180400"/>
</dbReference>
<dbReference type="Gramene" id="Os03t0180400-01">
    <property type="protein sequence ID" value="Os03t0180400-01"/>
    <property type="gene ID" value="Os03g0180400"/>
</dbReference>
<dbReference type="KEGG" id="dosa:Os03g0180400"/>
<dbReference type="eggNOG" id="KOG0182">
    <property type="taxonomic scope" value="Eukaryota"/>
</dbReference>
<dbReference type="HOGENOM" id="CLU_035750_4_1_1"/>
<dbReference type="InParanoid" id="Q9LSU3"/>
<dbReference type="OMA" id="EIGCIMT"/>
<dbReference type="OrthoDB" id="431557at2759"/>
<dbReference type="Proteomes" id="UP000000763">
    <property type="component" value="Chromosome 3"/>
</dbReference>
<dbReference type="Proteomes" id="UP000007752">
    <property type="component" value="Chromosome 3"/>
</dbReference>
<dbReference type="Proteomes" id="UP000059680">
    <property type="component" value="Chromosome 3"/>
</dbReference>
<dbReference type="GO" id="GO:0005737">
    <property type="term" value="C:cytoplasm"/>
    <property type="evidence" value="ECO:0007669"/>
    <property type="project" value="UniProtKB-SubCell"/>
</dbReference>
<dbReference type="GO" id="GO:0005634">
    <property type="term" value="C:nucleus"/>
    <property type="evidence" value="ECO:0000318"/>
    <property type="project" value="GO_Central"/>
</dbReference>
<dbReference type="GO" id="GO:0019773">
    <property type="term" value="C:proteasome core complex, alpha-subunit complex"/>
    <property type="evidence" value="ECO:0000250"/>
    <property type="project" value="UniProtKB"/>
</dbReference>
<dbReference type="GO" id="GO:0043161">
    <property type="term" value="P:proteasome-mediated ubiquitin-dependent protein catabolic process"/>
    <property type="evidence" value="ECO:0000318"/>
    <property type="project" value="GO_Central"/>
</dbReference>
<dbReference type="CDD" id="cd03754">
    <property type="entry name" value="proteasome_alpha_type_6"/>
    <property type="match status" value="1"/>
</dbReference>
<dbReference type="FunFam" id="3.60.20.10:FF:000036">
    <property type="entry name" value="Proteasome subunit alpha type"/>
    <property type="match status" value="1"/>
</dbReference>
<dbReference type="Gene3D" id="3.60.20.10">
    <property type="entry name" value="Glutamine Phosphoribosylpyrophosphate, subunit 1, domain 1"/>
    <property type="match status" value="1"/>
</dbReference>
<dbReference type="InterPro" id="IPR029055">
    <property type="entry name" value="Ntn_hydrolases_N"/>
</dbReference>
<dbReference type="InterPro" id="IPR050115">
    <property type="entry name" value="Proteasome_alpha"/>
</dbReference>
<dbReference type="InterPro" id="IPR023332">
    <property type="entry name" value="Proteasome_alpha-type"/>
</dbReference>
<dbReference type="InterPro" id="IPR000426">
    <property type="entry name" value="Proteasome_asu_N"/>
</dbReference>
<dbReference type="InterPro" id="IPR001353">
    <property type="entry name" value="Proteasome_sua/b"/>
</dbReference>
<dbReference type="InterPro" id="IPR034642">
    <property type="entry name" value="Proteasome_subunit_alpha6"/>
</dbReference>
<dbReference type="NCBIfam" id="NF003075">
    <property type="entry name" value="PRK03996.1"/>
    <property type="match status" value="1"/>
</dbReference>
<dbReference type="PANTHER" id="PTHR11599">
    <property type="entry name" value="PROTEASOME SUBUNIT ALPHA/BETA"/>
    <property type="match status" value="1"/>
</dbReference>
<dbReference type="Pfam" id="PF00227">
    <property type="entry name" value="Proteasome"/>
    <property type="match status" value="1"/>
</dbReference>
<dbReference type="Pfam" id="PF10584">
    <property type="entry name" value="Proteasome_A_N"/>
    <property type="match status" value="1"/>
</dbReference>
<dbReference type="SMART" id="SM00948">
    <property type="entry name" value="Proteasome_A_N"/>
    <property type="match status" value="1"/>
</dbReference>
<dbReference type="SUPFAM" id="SSF56235">
    <property type="entry name" value="N-terminal nucleophile aminohydrolases (Ntn hydrolases)"/>
    <property type="match status" value="1"/>
</dbReference>
<dbReference type="PROSITE" id="PS00388">
    <property type="entry name" value="PROTEASOME_ALPHA_1"/>
    <property type="match status" value="1"/>
</dbReference>
<dbReference type="PROSITE" id="PS51475">
    <property type="entry name" value="PROTEASOME_ALPHA_2"/>
    <property type="match status" value="1"/>
</dbReference>
<comment type="function">
    <text evidence="1">The proteasome is a multicatalytic proteinase complex which is characterized by its ability to cleave peptides with Arg, Phe, Tyr, Leu, and Glu adjacent to the leaving group at neutral or slightly basic pH. The proteasome has an ATP-dependent proteolytic activity (By similarity).</text>
</comment>
<comment type="subunit">
    <text evidence="1">The 26S proteasome consists of a 20S proteasome core and two 19S regulatory subunits. The 20S proteasome core is composed of 28 subunits that are arranged in four stacked rings, resulting in a barrel-shaped structure. The two end rings are each formed by seven alpha subunits, and the two central rings are each formed by seven beta subunits. The catalytic chamber with the active sites is on the inside of the barrel (By similarity).</text>
</comment>
<comment type="subcellular location">
    <subcellularLocation>
        <location evidence="1">Cytoplasm</location>
    </subcellularLocation>
    <subcellularLocation>
        <location evidence="1">Nucleus</location>
    </subcellularLocation>
</comment>
<comment type="similarity">
    <text evidence="2">Belongs to the peptidase T1A family.</text>
</comment>
<proteinExistence type="evidence at transcript level"/>
<accession>Q9LSU3</accession>
<accession>Q10QW9</accession>
<accession>Q7G665</accession>
<keyword id="KW-0963">Cytoplasm</keyword>
<keyword id="KW-0539">Nucleus</keyword>
<keyword id="KW-0647">Proteasome</keyword>
<keyword id="KW-1185">Reference proteome</keyword>
<protein>
    <recommendedName>
        <fullName>Proteasome subunit alpha type-6</fullName>
    </recommendedName>
    <alternativeName>
        <fullName>20S proteasome alpha subunit A</fullName>
    </alternativeName>
    <alternativeName>
        <fullName>20S proteasome subunit alpha-1</fullName>
    </alternativeName>
</protein>
<reference key="1">
    <citation type="journal article" date="2000" name="Gene">
        <title>Primary structural features of the 20S proteasome subunits of rice (Oryza sativa).</title>
        <authorList>
            <person name="Sassa H."/>
            <person name="Oguchi S."/>
            <person name="Inoue T."/>
            <person name="Hirano H."/>
        </authorList>
    </citation>
    <scope>NUCLEOTIDE SEQUENCE [MRNA]</scope>
    <source>
        <strain>cv. Nipponbare</strain>
    </source>
</reference>
<reference key="2">
    <citation type="journal article" date="2005" name="Genome Res.">
        <title>Sequence, annotation, and analysis of synteny between rice chromosome 3 and diverged grass species.</title>
        <authorList>
            <consortium name="The rice chromosome 3 sequencing consortium"/>
            <person name="Buell C.R."/>
            <person name="Yuan Q."/>
            <person name="Ouyang S."/>
            <person name="Liu J."/>
            <person name="Zhu W."/>
            <person name="Wang A."/>
            <person name="Maiti R."/>
            <person name="Haas B."/>
            <person name="Wortman J."/>
            <person name="Pertea M."/>
            <person name="Jones K.M."/>
            <person name="Kim M."/>
            <person name="Overton L."/>
            <person name="Tsitrin T."/>
            <person name="Fadrosh D."/>
            <person name="Bera J."/>
            <person name="Weaver B."/>
            <person name="Jin S."/>
            <person name="Johri S."/>
            <person name="Reardon M."/>
            <person name="Webb K."/>
            <person name="Hill J."/>
            <person name="Moffat K."/>
            <person name="Tallon L."/>
            <person name="Van Aken S."/>
            <person name="Lewis M."/>
            <person name="Utterback T."/>
            <person name="Feldblyum T."/>
            <person name="Zismann V."/>
            <person name="Iobst S."/>
            <person name="Hsiao J."/>
            <person name="de Vazeille A.R."/>
            <person name="Salzberg S.L."/>
            <person name="White O."/>
            <person name="Fraser C.M."/>
            <person name="Yu Y."/>
            <person name="Kim H."/>
            <person name="Rambo T."/>
            <person name="Currie J."/>
            <person name="Collura K."/>
            <person name="Kernodle-Thompson S."/>
            <person name="Wei F."/>
            <person name="Kudrna K."/>
            <person name="Ammiraju J.S.S."/>
            <person name="Luo M."/>
            <person name="Goicoechea J.L."/>
            <person name="Wing R.A."/>
            <person name="Henry D."/>
            <person name="Oates R."/>
            <person name="Palmer M."/>
            <person name="Pries G."/>
            <person name="Saski C."/>
            <person name="Simmons J."/>
            <person name="Soderlund C."/>
            <person name="Nelson W."/>
            <person name="de la Bastide M."/>
            <person name="Spiegel L."/>
            <person name="Nascimento L."/>
            <person name="Huang E."/>
            <person name="Preston R."/>
            <person name="Zutavern T."/>
            <person name="Palmer L."/>
            <person name="O'Shaughnessy A."/>
            <person name="Dike S."/>
            <person name="McCombie W.R."/>
            <person name="Minx P."/>
            <person name="Cordum H."/>
            <person name="Wilson R."/>
            <person name="Jin W."/>
            <person name="Lee H.R."/>
            <person name="Jiang J."/>
            <person name="Jackson S."/>
        </authorList>
    </citation>
    <scope>NUCLEOTIDE SEQUENCE [LARGE SCALE GENOMIC DNA]</scope>
    <source>
        <strain>cv. Nipponbare</strain>
    </source>
</reference>
<reference key="3">
    <citation type="journal article" date="2005" name="Nature">
        <title>The map-based sequence of the rice genome.</title>
        <authorList>
            <consortium name="International rice genome sequencing project (IRGSP)"/>
        </authorList>
    </citation>
    <scope>NUCLEOTIDE SEQUENCE [LARGE SCALE GENOMIC DNA]</scope>
    <source>
        <strain>cv. Nipponbare</strain>
    </source>
</reference>
<reference key="4">
    <citation type="journal article" date="2008" name="Nucleic Acids Res.">
        <title>The rice annotation project database (RAP-DB): 2008 update.</title>
        <authorList>
            <consortium name="The rice annotation project (RAP)"/>
        </authorList>
    </citation>
    <scope>GENOME REANNOTATION</scope>
    <source>
        <strain>cv. Nipponbare</strain>
    </source>
</reference>
<reference key="5">
    <citation type="journal article" date="2013" name="Rice">
        <title>Improvement of the Oryza sativa Nipponbare reference genome using next generation sequence and optical map data.</title>
        <authorList>
            <person name="Kawahara Y."/>
            <person name="de la Bastide M."/>
            <person name="Hamilton J.P."/>
            <person name="Kanamori H."/>
            <person name="McCombie W.R."/>
            <person name="Ouyang S."/>
            <person name="Schwartz D.C."/>
            <person name="Tanaka T."/>
            <person name="Wu J."/>
            <person name="Zhou S."/>
            <person name="Childs K.L."/>
            <person name="Davidson R.M."/>
            <person name="Lin H."/>
            <person name="Quesada-Ocampo L."/>
            <person name="Vaillancourt B."/>
            <person name="Sakai H."/>
            <person name="Lee S.S."/>
            <person name="Kim J."/>
            <person name="Numa H."/>
            <person name="Itoh T."/>
            <person name="Buell C.R."/>
            <person name="Matsumoto T."/>
        </authorList>
    </citation>
    <scope>GENOME REANNOTATION</scope>
    <source>
        <strain>cv. Nipponbare</strain>
    </source>
</reference>
<reference key="6">
    <citation type="journal article" date="2005" name="PLoS Biol.">
        <title>The genomes of Oryza sativa: a history of duplications.</title>
        <authorList>
            <person name="Yu J."/>
            <person name="Wang J."/>
            <person name="Lin W."/>
            <person name="Li S."/>
            <person name="Li H."/>
            <person name="Zhou J."/>
            <person name="Ni P."/>
            <person name="Dong W."/>
            <person name="Hu S."/>
            <person name="Zeng C."/>
            <person name="Zhang J."/>
            <person name="Zhang Y."/>
            <person name="Li R."/>
            <person name="Xu Z."/>
            <person name="Li S."/>
            <person name="Li X."/>
            <person name="Zheng H."/>
            <person name="Cong L."/>
            <person name="Lin L."/>
            <person name="Yin J."/>
            <person name="Geng J."/>
            <person name="Li G."/>
            <person name="Shi J."/>
            <person name="Liu J."/>
            <person name="Lv H."/>
            <person name="Li J."/>
            <person name="Wang J."/>
            <person name="Deng Y."/>
            <person name="Ran L."/>
            <person name="Shi X."/>
            <person name="Wang X."/>
            <person name="Wu Q."/>
            <person name="Li C."/>
            <person name="Ren X."/>
            <person name="Wang J."/>
            <person name="Wang X."/>
            <person name="Li D."/>
            <person name="Liu D."/>
            <person name="Zhang X."/>
            <person name="Ji Z."/>
            <person name="Zhao W."/>
            <person name="Sun Y."/>
            <person name="Zhang Z."/>
            <person name="Bao J."/>
            <person name="Han Y."/>
            <person name="Dong L."/>
            <person name="Ji J."/>
            <person name="Chen P."/>
            <person name="Wu S."/>
            <person name="Liu J."/>
            <person name="Xiao Y."/>
            <person name="Bu D."/>
            <person name="Tan J."/>
            <person name="Yang L."/>
            <person name="Ye C."/>
            <person name="Zhang J."/>
            <person name="Xu J."/>
            <person name="Zhou Y."/>
            <person name="Yu Y."/>
            <person name="Zhang B."/>
            <person name="Zhuang S."/>
            <person name="Wei H."/>
            <person name="Liu B."/>
            <person name="Lei M."/>
            <person name="Yu H."/>
            <person name="Li Y."/>
            <person name="Xu H."/>
            <person name="Wei S."/>
            <person name="He X."/>
            <person name="Fang L."/>
            <person name="Zhang Z."/>
            <person name="Zhang Y."/>
            <person name="Huang X."/>
            <person name="Su Z."/>
            <person name="Tong W."/>
            <person name="Li J."/>
            <person name="Tong Z."/>
            <person name="Li S."/>
            <person name="Ye J."/>
            <person name="Wang L."/>
            <person name="Fang L."/>
            <person name="Lei T."/>
            <person name="Chen C.-S."/>
            <person name="Chen H.-C."/>
            <person name="Xu Z."/>
            <person name="Li H."/>
            <person name="Huang H."/>
            <person name="Zhang F."/>
            <person name="Xu H."/>
            <person name="Li N."/>
            <person name="Zhao C."/>
            <person name="Li S."/>
            <person name="Dong L."/>
            <person name="Huang Y."/>
            <person name="Li L."/>
            <person name="Xi Y."/>
            <person name="Qi Q."/>
            <person name="Li W."/>
            <person name="Zhang B."/>
            <person name="Hu W."/>
            <person name="Zhang Y."/>
            <person name="Tian X."/>
            <person name="Jiao Y."/>
            <person name="Liang X."/>
            <person name="Jin J."/>
            <person name="Gao L."/>
            <person name="Zheng W."/>
            <person name="Hao B."/>
            <person name="Liu S.-M."/>
            <person name="Wang W."/>
            <person name="Yuan L."/>
            <person name="Cao M."/>
            <person name="McDermott J."/>
            <person name="Samudrala R."/>
            <person name="Wang J."/>
            <person name="Wong G.K.-S."/>
            <person name="Yang H."/>
        </authorList>
    </citation>
    <scope>NUCLEOTIDE SEQUENCE [LARGE SCALE GENOMIC DNA]</scope>
    <source>
        <strain>cv. Nipponbare</strain>
    </source>
</reference>
<reference key="7">
    <citation type="journal article" date="2003" name="Science">
        <title>Collection, mapping, and annotation of over 28,000 cDNA clones from japonica rice.</title>
        <authorList>
            <consortium name="The rice full-length cDNA consortium"/>
        </authorList>
    </citation>
    <scope>NUCLEOTIDE SEQUENCE [LARGE SCALE MRNA]</scope>
    <source>
        <strain>cv. Nipponbare</strain>
    </source>
</reference>
<organism>
    <name type="scientific">Oryza sativa subsp. japonica</name>
    <name type="common">Rice</name>
    <dbReference type="NCBI Taxonomy" id="39947"/>
    <lineage>
        <taxon>Eukaryota</taxon>
        <taxon>Viridiplantae</taxon>
        <taxon>Streptophyta</taxon>
        <taxon>Embryophyta</taxon>
        <taxon>Tracheophyta</taxon>
        <taxon>Spermatophyta</taxon>
        <taxon>Magnoliopsida</taxon>
        <taxon>Liliopsida</taxon>
        <taxon>Poales</taxon>
        <taxon>Poaceae</taxon>
        <taxon>BOP clade</taxon>
        <taxon>Oryzoideae</taxon>
        <taxon>Oryzeae</taxon>
        <taxon>Oryzinae</taxon>
        <taxon>Oryza</taxon>
        <taxon>Oryza sativa</taxon>
    </lineage>
</organism>
<feature type="chain" id="PRO_0000124137" description="Proteasome subunit alpha type-6">
    <location>
        <begin position="1"/>
        <end position="246"/>
    </location>
</feature>
<name>PSA6_ORYSJ</name>